<evidence type="ECO:0000255" key="1">
    <source>
        <dbReference type="HAMAP-Rule" id="MF_00340"/>
    </source>
</evidence>
<evidence type="ECO:0000305" key="2"/>
<feature type="chain" id="PRO_0000296617" description="Large ribosomal subunit protein bL32c">
    <location>
        <begin position="1"/>
        <end position="57"/>
    </location>
</feature>
<name>RK32_NANDO</name>
<protein>
    <recommendedName>
        <fullName evidence="1">Large ribosomal subunit protein bL32c</fullName>
    </recommendedName>
    <alternativeName>
        <fullName evidence="2">50S ribosomal protein L32, chloroplastic</fullName>
    </alternativeName>
</protein>
<dbReference type="EMBL" id="DQ923117">
    <property type="protein sequence ID" value="ABI49913.1"/>
    <property type="molecule type" value="Genomic_DNA"/>
</dbReference>
<dbReference type="RefSeq" id="YP_740699.1">
    <property type="nucleotide sequence ID" value="NC_008336.1"/>
</dbReference>
<dbReference type="SMR" id="Q09FR2"/>
<dbReference type="GeneID" id="4271646"/>
<dbReference type="GO" id="GO:0009507">
    <property type="term" value="C:chloroplast"/>
    <property type="evidence" value="ECO:0007669"/>
    <property type="project" value="UniProtKB-SubCell"/>
</dbReference>
<dbReference type="GO" id="GO:0015934">
    <property type="term" value="C:large ribosomal subunit"/>
    <property type="evidence" value="ECO:0007669"/>
    <property type="project" value="InterPro"/>
</dbReference>
<dbReference type="GO" id="GO:0003735">
    <property type="term" value="F:structural constituent of ribosome"/>
    <property type="evidence" value="ECO:0007669"/>
    <property type="project" value="InterPro"/>
</dbReference>
<dbReference type="GO" id="GO:0006412">
    <property type="term" value="P:translation"/>
    <property type="evidence" value="ECO:0007669"/>
    <property type="project" value="UniProtKB-UniRule"/>
</dbReference>
<dbReference type="HAMAP" id="MF_00340">
    <property type="entry name" value="Ribosomal_bL32"/>
    <property type="match status" value="1"/>
</dbReference>
<dbReference type="InterPro" id="IPR002677">
    <property type="entry name" value="Ribosomal_bL32"/>
</dbReference>
<dbReference type="InterPro" id="IPR044958">
    <property type="entry name" value="Ribosomal_bL32_plant/cyanobact"/>
</dbReference>
<dbReference type="InterPro" id="IPR011332">
    <property type="entry name" value="Ribosomal_zn-bd"/>
</dbReference>
<dbReference type="PANTHER" id="PTHR36083">
    <property type="entry name" value="50S RIBOSOMAL PROTEIN L32, CHLOROPLASTIC"/>
    <property type="match status" value="1"/>
</dbReference>
<dbReference type="PANTHER" id="PTHR36083:SF1">
    <property type="entry name" value="LARGE RIBOSOMAL SUBUNIT PROTEIN BL32C"/>
    <property type="match status" value="1"/>
</dbReference>
<dbReference type="Pfam" id="PF01783">
    <property type="entry name" value="Ribosomal_L32p"/>
    <property type="match status" value="1"/>
</dbReference>
<dbReference type="SUPFAM" id="SSF57829">
    <property type="entry name" value="Zn-binding ribosomal proteins"/>
    <property type="match status" value="1"/>
</dbReference>
<proteinExistence type="inferred from homology"/>
<keyword id="KW-0150">Chloroplast</keyword>
<keyword id="KW-0934">Plastid</keyword>
<keyword id="KW-0687">Ribonucleoprotein</keyword>
<keyword id="KW-0689">Ribosomal protein</keyword>
<geneLocation type="chloroplast"/>
<accession>Q09FR2</accession>
<comment type="subcellular location">
    <subcellularLocation>
        <location>Plastid</location>
        <location>Chloroplast</location>
    </subcellularLocation>
</comment>
<comment type="similarity">
    <text evidence="1">Belongs to the bacterial ribosomal protein bL32 family.</text>
</comment>
<organism>
    <name type="scientific">Nandina domestica</name>
    <name type="common">Heavenly bamboo</name>
    <dbReference type="NCBI Taxonomy" id="41776"/>
    <lineage>
        <taxon>Eukaryota</taxon>
        <taxon>Viridiplantae</taxon>
        <taxon>Streptophyta</taxon>
        <taxon>Embryophyta</taxon>
        <taxon>Tracheophyta</taxon>
        <taxon>Spermatophyta</taxon>
        <taxon>Magnoliopsida</taxon>
        <taxon>Ranunculales</taxon>
        <taxon>Berberidaceae</taxon>
        <taxon>Nandinoideae</taxon>
        <taxon>Nandineae</taxon>
        <taxon>Nandina</taxon>
    </lineage>
</organism>
<reference key="1">
    <citation type="journal article" date="2006" name="BMC Plant Biol.">
        <title>Rapid and accurate pyrosequencing of angiosperm plastid genomes.</title>
        <authorList>
            <person name="Moore M.J."/>
            <person name="Dhingra A."/>
            <person name="Soltis P.S."/>
            <person name="Shaw R."/>
            <person name="Farmerie W.G."/>
            <person name="Folta K.M."/>
            <person name="Soltis D.E."/>
        </authorList>
    </citation>
    <scope>NUCLEOTIDE SEQUENCE [LARGE SCALE GENOMIC DNA]</scope>
</reference>
<gene>
    <name evidence="1" type="primary">rpl32</name>
</gene>
<sequence length="57" mass="6457">MAVPKKRTSISKKRIRKNIWKLKGHWAAKKAISLAKSISTGNSKSFFVQQTSNKVLE</sequence>